<accession>Q84W80</accession>
<accession>C0Z2J3</accession>
<accession>Q0WMB7</accession>
<accession>Q9SRP0</accession>
<feature type="chain" id="PRO_0000281943" description="F-box/LRR-repeat protein At3g03360">
    <location>
        <begin position="1"/>
        <end position="481"/>
    </location>
</feature>
<feature type="domain" description="F-box" evidence="1">
    <location>
        <begin position="36"/>
        <end position="84"/>
    </location>
</feature>
<feature type="repeat" description="LRR 1">
    <location>
        <begin position="118"/>
        <end position="145"/>
    </location>
</feature>
<feature type="repeat" description="LRR 2">
    <location>
        <begin position="196"/>
        <end position="221"/>
    </location>
</feature>
<feature type="repeat" description="LRR 3">
    <location>
        <begin position="295"/>
        <end position="320"/>
    </location>
</feature>
<feature type="repeat" description="LRR 4">
    <location>
        <begin position="350"/>
        <end position="375"/>
    </location>
</feature>
<feature type="repeat" description="LRR 5">
    <location>
        <begin position="413"/>
        <end position="439"/>
    </location>
</feature>
<feature type="region of interest" description="Disordered" evidence="2">
    <location>
        <begin position="1"/>
        <end position="28"/>
    </location>
</feature>
<feature type="compositionally biased region" description="Low complexity" evidence="2">
    <location>
        <begin position="14"/>
        <end position="28"/>
    </location>
</feature>
<feature type="splice variant" id="VSP_024105" description="In isoform 2." evidence="4">
    <original>MEKESQENSTRPDASSTVFSSSK</original>
    <variation>MWVMRYLYKLQ</variation>
    <location>
        <begin position="1"/>
        <end position="23"/>
    </location>
</feature>
<feature type="splice variant" id="VSP_037951" description="In isoform 2." evidence="4">
    <location>
        <begin position="208"/>
        <end position="481"/>
    </location>
</feature>
<feature type="splice variant" id="VSP_037952" description="In isoform 1." evidence="3">
    <original>EEHIDI</original>
    <variation>VIMNIP</variation>
    <location>
        <begin position="386"/>
        <end position="391"/>
    </location>
</feature>
<feature type="splice variant" id="VSP_037953" description="In isoform 1." evidence="3">
    <location>
        <begin position="392"/>
        <end position="481"/>
    </location>
</feature>
<reference key="1">
    <citation type="journal article" date="2000" name="Nature">
        <title>Sequence and analysis of chromosome 3 of the plant Arabidopsis thaliana.</title>
        <authorList>
            <person name="Salanoubat M."/>
            <person name="Lemcke K."/>
            <person name="Rieger M."/>
            <person name="Ansorge W."/>
            <person name="Unseld M."/>
            <person name="Fartmann B."/>
            <person name="Valle G."/>
            <person name="Bloecker H."/>
            <person name="Perez-Alonso M."/>
            <person name="Obermaier B."/>
            <person name="Delseny M."/>
            <person name="Boutry M."/>
            <person name="Grivell L.A."/>
            <person name="Mache R."/>
            <person name="Puigdomenech P."/>
            <person name="De Simone V."/>
            <person name="Choisne N."/>
            <person name="Artiguenave F."/>
            <person name="Robert C."/>
            <person name="Brottier P."/>
            <person name="Wincker P."/>
            <person name="Cattolico L."/>
            <person name="Weissenbach J."/>
            <person name="Saurin W."/>
            <person name="Quetier F."/>
            <person name="Schaefer M."/>
            <person name="Mueller-Auer S."/>
            <person name="Gabel C."/>
            <person name="Fuchs M."/>
            <person name="Benes V."/>
            <person name="Wurmbach E."/>
            <person name="Drzonek H."/>
            <person name="Erfle H."/>
            <person name="Jordan N."/>
            <person name="Bangert S."/>
            <person name="Wiedelmann R."/>
            <person name="Kranz H."/>
            <person name="Voss H."/>
            <person name="Holland R."/>
            <person name="Brandt P."/>
            <person name="Nyakatura G."/>
            <person name="Vezzi A."/>
            <person name="D'Angelo M."/>
            <person name="Pallavicini A."/>
            <person name="Toppo S."/>
            <person name="Simionati B."/>
            <person name="Conrad A."/>
            <person name="Hornischer K."/>
            <person name="Kauer G."/>
            <person name="Loehnert T.-H."/>
            <person name="Nordsiek G."/>
            <person name="Reichelt J."/>
            <person name="Scharfe M."/>
            <person name="Schoen O."/>
            <person name="Bargues M."/>
            <person name="Terol J."/>
            <person name="Climent J."/>
            <person name="Navarro P."/>
            <person name="Collado C."/>
            <person name="Perez-Perez A."/>
            <person name="Ottenwaelder B."/>
            <person name="Duchemin D."/>
            <person name="Cooke R."/>
            <person name="Laudie M."/>
            <person name="Berger-Llauro C."/>
            <person name="Purnelle B."/>
            <person name="Masuy D."/>
            <person name="de Haan M."/>
            <person name="Maarse A.C."/>
            <person name="Alcaraz J.-P."/>
            <person name="Cottet A."/>
            <person name="Casacuberta E."/>
            <person name="Monfort A."/>
            <person name="Argiriou A."/>
            <person name="Flores M."/>
            <person name="Liguori R."/>
            <person name="Vitale D."/>
            <person name="Mannhaupt G."/>
            <person name="Haase D."/>
            <person name="Schoof H."/>
            <person name="Rudd S."/>
            <person name="Zaccaria P."/>
            <person name="Mewes H.-W."/>
            <person name="Mayer K.F.X."/>
            <person name="Kaul S."/>
            <person name="Town C.D."/>
            <person name="Koo H.L."/>
            <person name="Tallon L.J."/>
            <person name="Jenkins J."/>
            <person name="Rooney T."/>
            <person name="Rizzo M."/>
            <person name="Walts A."/>
            <person name="Utterback T."/>
            <person name="Fujii C.Y."/>
            <person name="Shea T.P."/>
            <person name="Creasy T.H."/>
            <person name="Haas B."/>
            <person name="Maiti R."/>
            <person name="Wu D."/>
            <person name="Peterson J."/>
            <person name="Van Aken S."/>
            <person name="Pai G."/>
            <person name="Militscher J."/>
            <person name="Sellers P."/>
            <person name="Gill J.E."/>
            <person name="Feldblyum T.V."/>
            <person name="Preuss D."/>
            <person name="Lin X."/>
            <person name="Nierman W.C."/>
            <person name="Salzberg S.L."/>
            <person name="White O."/>
            <person name="Venter J.C."/>
            <person name="Fraser C.M."/>
            <person name="Kaneko T."/>
            <person name="Nakamura Y."/>
            <person name="Sato S."/>
            <person name="Kato T."/>
            <person name="Asamizu E."/>
            <person name="Sasamoto S."/>
            <person name="Kimura T."/>
            <person name="Idesawa K."/>
            <person name="Kawashima K."/>
            <person name="Kishida Y."/>
            <person name="Kiyokawa C."/>
            <person name="Kohara M."/>
            <person name="Matsumoto M."/>
            <person name="Matsuno A."/>
            <person name="Muraki A."/>
            <person name="Nakayama S."/>
            <person name="Nakazaki N."/>
            <person name="Shinpo S."/>
            <person name="Takeuchi C."/>
            <person name="Wada T."/>
            <person name="Watanabe A."/>
            <person name="Yamada M."/>
            <person name="Yasuda M."/>
            <person name="Tabata S."/>
        </authorList>
    </citation>
    <scope>NUCLEOTIDE SEQUENCE [LARGE SCALE GENOMIC DNA]</scope>
    <source>
        <strain>cv. Columbia</strain>
    </source>
</reference>
<reference key="2">
    <citation type="journal article" date="2017" name="Plant J.">
        <title>Araport11: a complete reannotation of the Arabidopsis thaliana reference genome.</title>
        <authorList>
            <person name="Cheng C.Y."/>
            <person name="Krishnakumar V."/>
            <person name="Chan A.P."/>
            <person name="Thibaud-Nissen F."/>
            <person name="Schobel S."/>
            <person name="Town C.D."/>
        </authorList>
    </citation>
    <scope>GENOME REANNOTATION</scope>
    <source>
        <strain>cv. Columbia</strain>
    </source>
</reference>
<reference key="3">
    <citation type="journal article" date="2003" name="Science">
        <title>Empirical analysis of transcriptional activity in the Arabidopsis genome.</title>
        <authorList>
            <person name="Yamada K."/>
            <person name="Lim J."/>
            <person name="Dale J.M."/>
            <person name="Chen H."/>
            <person name="Shinn P."/>
            <person name="Palm C.J."/>
            <person name="Southwick A.M."/>
            <person name="Wu H.C."/>
            <person name="Kim C.J."/>
            <person name="Nguyen M."/>
            <person name="Pham P.K."/>
            <person name="Cheuk R.F."/>
            <person name="Karlin-Newmann G."/>
            <person name="Liu S.X."/>
            <person name="Lam B."/>
            <person name="Sakano H."/>
            <person name="Wu T."/>
            <person name="Yu G."/>
            <person name="Miranda M."/>
            <person name="Quach H.L."/>
            <person name="Tripp M."/>
            <person name="Chang C.H."/>
            <person name="Lee J.M."/>
            <person name="Toriumi M.J."/>
            <person name="Chan M.M."/>
            <person name="Tang C.C."/>
            <person name="Onodera C.S."/>
            <person name="Deng J.M."/>
            <person name="Akiyama K."/>
            <person name="Ansari Y."/>
            <person name="Arakawa T."/>
            <person name="Banh J."/>
            <person name="Banno F."/>
            <person name="Bowser L."/>
            <person name="Brooks S.Y."/>
            <person name="Carninci P."/>
            <person name="Chao Q."/>
            <person name="Choy N."/>
            <person name="Enju A."/>
            <person name="Goldsmith A.D."/>
            <person name="Gurjal M."/>
            <person name="Hansen N.F."/>
            <person name="Hayashizaki Y."/>
            <person name="Johnson-Hopson C."/>
            <person name="Hsuan V.W."/>
            <person name="Iida K."/>
            <person name="Karnes M."/>
            <person name="Khan S."/>
            <person name="Koesema E."/>
            <person name="Ishida J."/>
            <person name="Jiang P.X."/>
            <person name="Jones T."/>
            <person name="Kawai J."/>
            <person name="Kamiya A."/>
            <person name="Meyers C."/>
            <person name="Nakajima M."/>
            <person name="Narusaka M."/>
            <person name="Seki M."/>
            <person name="Sakurai T."/>
            <person name="Satou M."/>
            <person name="Tamse R."/>
            <person name="Vaysberg M."/>
            <person name="Wallender E.K."/>
            <person name="Wong C."/>
            <person name="Yamamura Y."/>
            <person name="Yuan S."/>
            <person name="Shinozaki K."/>
            <person name="Davis R.W."/>
            <person name="Theologis A."/>
            <person name="Ecker J.R."/>
        </authorList>
    </citation>
    <scope>NUCLEOTIDE SEQUENCE [LARGE SCALE MRNA] (ISOFORM 1)</scope>
    <source>
        <strain>cv. Columbia</strain>
    </source>
</reference>
<reference key="4">
    <citation type="journal article" date="2009" name="DNA Res.">
        <title>Analysis of multiple occurrences of alternative splicing events in Arabidopsis thaliana using novel sequenced full-length cDNAs.</title>
        <authorList>
            <person name="Iida K."/>
            <person name="Fukami-Kobayashi K."/>
            <person name="Toyoda A."/>
            <person name="Sakaki Y."/>
            <person name="Kobayashi M."/>
            <person name="Seki M."/>
            <person name="Shinozaki K."/>
        </authorList>
    </citation>
    <scope>NUCLEOTIDE SEQUENCE [LARGE SCALE MRNA] (ISOFORM 3)</scope>
    <source>
        <strain>cv. Columbia</strain>
    </source>
</reference>
<reference key="5">
    <citation type="submission" date="2006-07" db="EMBL/GenBank/DDBJ databases">
        <title>Large-scale analysis of RIKEN Arabidopsis full-length (RAFL) cDNAs.</title>
        <authorList>
            <person name="Totoki Y."/>
            <person name="Seki M."/>
            <person name="Ishida J."/>
            <person name="Nakajima M."/>
            <person name="Enju A."/>
            <person name="Kamiya A."/>
            <person name="Narusaka M."/>
            <person name="Shin-i T."/>
            <person name="Nakagawa M."/>
            <person name="Sakamoto N."/>
            <person name="Oishi K."/>
            <person name="Kohara Y."/>
            <person name="Kobayashi M."/>
            <person name="Toyoda A."/>
            <person name="Sakaki Y."/>
            <person name="Sakurai T."/>
            <person name="Iida K."/>
            <person name="Akiyama K."/>
            <person name="Satou M."/>
            <person name="Toyoda T."/>
            <person name="Konagaya A."/>
            <person name="Carninci P."/>
            <person name="Kawai J."/>
            <person name="Hayashizaki Y."/>
            <person name="Shinozaki K."/>
        </authorList>
    </citation>
    <scope>NUCLEOTIDE SEQUENCE [LARGE SCALE MRNA] OF 1-207 (ISOFORM 2)</scope>
    <source>
        <strain>cv. Columbia</strain>
    </source>
</reference>
<sequence length="481" mass="54948">MEKESQENSTRPDASSTVFSSSKSTCASPSYLKEAGDLISRLPDDILQLILSYLPTRLAIKTSVLSRRWRHVWSDTWSLSFHRDRPDAPCINRILDRYRAPKMMSFRICSCCRAACISRPDTHADIDSWINFAMSRNVENLSLYLDEDKYDIPEFLYINSSLKQLYLDFGCKKDFISLNPKCSVSWTSLKNLSLYHCNISDESIAIILSGCPILESLLLFFCKKLKVLDLSKSPRLITLEITRRCRMEPTQLVAPHIRCLRLINSEKPCALVDVSSLSQAELDITAYAIVDNKLEADFHQTMVVKMLEKCQNVEKLTLGANFLKMLSLAELRGVSFPKLKAKALILETMISRYVIHGIVKVLQNSPDLKKLTIHPMGSAGSYPIPEEHIDIYLDSHGLNWDPSWSSEFKNTSRRNVESKQVASFLQLVLKTISTLELIVARLEGYIKGRRFVELRQMVPMLPRNNDVSIVLSSRRKRFRVT</sequence>
<comment type="alternative products">
    <event type="alternative splicing"/>
    <isoform>
        <id>Q84W80-3</id>
        <name>3</name>
        <sequence type="displayed"/>
    </isoform>
    <isoform>
        <id>Q84W80-1</id>
        <name>1</name>
        <sequence type="described" ref="VSP_037952 VSP_037953"/>
    </isoform>
    <isoform>
        <id>Q84W80-2</id>
        <name>2</name>
        <sequence type="described" ref="VSP_024105 VSP_037951"/>
    </isoform>
</comment>
<comment type="miscellaneous">
    <molecule>Isoform 1</molecule>
    <text evidence="5">May be due to an intron retention.</text>
</comment>
<comment type="miscellaneous">
    <molecule>Isoform 2</molecule>
    <text evidence="5">Incomplete sequence.</text>
</comment>
<gene>
    <name type="ordered locus">At3g03360</name>
    <name type="ORF">T21P5.22</name>
</gene>
<organism>
    <name type="scientific">Arabidopsis thaliana</name>
    <name type="common">Mouse-ear cress</name>
    <dbReference type="NCBI Taxonomy" id="3702"/>
    <lineage>
        <taxon>Eukaryota</taxon>
        <taxon>Viridiplantae</taxon>
        <taxon>Streptophyta</taxon>
        <taxon>Embryophyta</taxon>
        <taxon>Tracheophyta</taxon>
        <taxon>Spermatophyta</taxon>
        <taxon>Magnoliopsida</taxon>
        <taxon>eudicotyledons</taxon>
        <taxon>Gunneridae</taxon>
        <taxon>Pentapetalae</taxon>
        <taxon>rosids</taxon>
        <taxon>malvids</taxon>
        <taxon>Brassicales</taxon>
        <taxon>Brassicaceae</taxon>
        <taxon>Camelineae</taxon>
        <taxon>Arabidopsis</taxon>
    </lineage>
</organism>
<keyword id="KW-0025">Alternative splicing</keyword>
<keyword id="KW-0433">Leucine-rich repeat</keyword>
<keyword id="KW-1185">Reference proteome</keyword>
<keyword id="KW-0677">Repeat</keyword>
<protein>
    <recommendedName>
        <fullName>F-box/LRR-repeat protein At3g03360</fullName>
    </recommendedName>
</protein>
<name>FBL42_ARATH</name>
<evidence type="ECO:0000255" key="1">
    <source>
        <dbReference type="PROSITE-ProRule" id="PRU00080"/>
    </source>
</evidence>
<evidence type="ECO:0000256" key="2">
    <source>
        <dbReference type="SAM" id="MobiDB-lite"/>
    </source>
</evidence>
<evidence type="ECO:0000303" key="3">
    <source>
    </source>
</evidence>
<evidence type="ECO:0000303" key="4">
    <source ref="5"/>
</evidence>
<evidence type="ECO:0000305" key="5"/>
<proteinExistence type="evidence at transcript level"/>
<dbReference type="EMBL" id="AC009895">
    <property type="protein sequence ID" value="AAF01596.1"/>
    <property type="molecule type" value="Genomic_DNA"/>
</dbReference>
<dbReference type="EMBL" id="CP002686">
    <property type="status" value="NOT_ANNOTATED_CDS"/>
    <property type="molecule type" value="Genomic_DNA"/>
</dbReference>
<dbReference type="EMBL" id="BT004131">
    <property type="protein sequence ID" value="AAO42153.1"/>
    <property type="molecule type" value="mRNA"/>
</dbReference>
<dbReference type="EMBL" id="AK318807">
    <property type="protein sequence ID" value="BAH56922.1"/>
    <property type="molecule type" value="mRNA"/>
</dbReference>
<dbReference type="EMBL" id="AK229563">
    <property type="protein sequence ID" value="BAF01415.1"/>
    <property type="molecule type" value="mRNA"/>
</dbReference>
<dbReference type="EMBL" id="AK229911">
    <property type="protein sequence ID" value="BAF01739.1"/>
    <property type="molecule type" value="mRNA"/>
</dbReference>
<dbReference type="BioGRID" id="6605">
    <property type="interactions" value="16"/>
</dbReference>
<dbReference type="FunCoup" id="Q84W80">
    <property type="interactions" value="378"/>
</dbReference>
<dbReference type="STRING" id="3702.Q84W80"/>
<dbReference type="PaxDb" id="3702-AT3G03360.1"/>
<dbReference type="Araport" id="AT3G03360"/>
<dbReference type="TAIR" id="AT3G03360"/>
<dbReference type="eggNOG" id="ENOG502T15N">
    <property type="taxonomic scope" value="Eukaryota"/>
</dbReference>
<dbReference type="HOGENOM" id="CLU_010721_5_0_1"/>
<dbReference type="InParanoid" id="Q84W80"/>
<dbReference type="PhylomeDB" id="Q84W80"/>
<dbReference type="PRO" id="PR:Q84W80"/>
<dbReference type="Proteomes" id="UP000006548">
    <property type="component" value="Chromosome 3"/>
</dbReference>
<dbReference type="ExpressionAtlas" id="Q84W80">
    <property type="expression patterns" value="baseline and differential"/>
</dbReference>
<dbReference type="GO" id="GO:0005737">
    <property type="term" value="C:cytoplasm"/>
    <property type="evidence" value="ECO:0000314"/>
    <property type="project" value="TAIR"/>
</dbReference>
<dbReference type="CDD" id="cd22160">
    <property type="entry name" value="F-box_AtFBL13-like"/>
    <property type="match status" value="1"/>
</dbReference>
<dbReference type="Gene3D" id="1.20.1280.50">
    <property type="match status" value="1"/>
</dbReference>
<dbReference type="Gene3D" id="3.80.10.10">
    <property type="entry name" value="Ribonuclease Inhibitor"/>
    <property type="match status" value="1"/>
</dbReference>
<dbReference type="InterPro" id="IPR036047">
    <property type="entry name" value="F-box-like_dom_sf"/>
</dbReference>
<dbReference type="InterPro" id="IPR053781">
    <property type="entry name" value="F-box_AtFBL13-like"/>
</dbReference>
<dbReference type="InterPro" id="IPR001810">
    <property type="entry name" value="F-box_dom"/>
</dbReference>
<dbReference type="InterPro" id="IPR044997">
    <property type="entry name" value="F-box_plant"/>
</dbReference>
<dbReference type="InterPro" id="IPR055357">
    <property type="entry name" value="LRR_At1g61320_AtMIF1"/>
</dbReference>
<dbReference type="InterPro" id="IPR032675">
    <property type="entry name" value="LRR_dom_sf"/>
</dbReference>
<dbReference type="PANTHER" id="PTHR32153">
    <property type="entry name" value="OJ000223_09.16 PROTEIN"/>
    <property type="match status" value="1"/>
</dbReference>
<dbReference type="Pfam" id="PF00646">
    <property type="entry name" value="F-box"/>
    <property type="match status" value="1"/>
</dbReference>
<dbReference type="Pfam" id="PF23622">
    <property type="entry name" value="LRR_At1g61320_AtMIF1"/>
    <property type="match status" value="1"/>
</dbReference>
<dbReference type="SMART" id="SM00256">
    <property type="entry name" value="FBOX"/>
    <property type="match status" value="1"/>
</dbReference>
<dbReference type="SUPFAM" id="SSF81383">
    <property type="entry name" value="F-box domain"/>
    <property type="match status" value="1"/>
</dbReference>
<dbReference type="SUPFAM" id="SSF52047">
    <property type="entry name" value="RNI-like"/>
    <property type="match status" value="1"/>
</dbReference>
<dbReference type="PROSITE" id="PS50181">
    <property type="entry name" value="FBOX"/>
    <property type="match status" value="1"/>
</dbReference>